<dbReference type="EMBL" id="AY171104">
    <property type="protein sequence ID" value="AAO13511.1"/>
    <property type="status" value="ALT_INIT"/>
    <property type="molecule type" value="Genomic_DNA"/>
</dbReference>
<dbReference type="EMBL" id="EU407781">
    <property type="protein sequence ID" value="ACB06105.1"/>
    <property type="molecule type" value="Genomic_DNA"/>
</dbReference>
<dbReference type="EMBL" id="EU407782">
    <property type="protein sequence ID" value="ACB06117.1"/>
    <property type="molecule type" value="Genomic_DNA"/>
</dbReference>
<dbReference type="EMBL" id="EU407783">
    <property type="protein sequence ID" value="ACB06129.1"/>
    <property type="molecule type" value="Genomic_DNA"/>
</dbReference>
<dbReference type="EMBL" id="EU407784">
    <property type="protein sequence ID" value="ACB06141.1"/>
    <property type="molecule type" value="Genomic_DNA"/>
</dbReference>
<dbReference type="EMBL" id="EU407785">
    <property type="protein sequence ID" value="ACB06153.1"/>
    <property type="molecule type" value="Genomic_DNA"/>
</dbReference>
<dbReference type="EMBL" id="EU407786">
    <property type="protein sequence ID" value="ACB06165.1"/>
    <property type="molecule type" value="Genomic_DNA"/>
</dbReference>
<dbReference type="EMBL" id="EU407787">
    <property type="protein sequence ID" value="ACB06177.1"/>
    <property type="molecule type" value="Genomic_DNA"/>
</dbReference>
<dbReference type="EMBL" id="EU407788">
    <property type="protein sequence ID" value="ACB06189.1"/>
    <property type="molecule type" value="Genomic_DNA"/>
</dbReference>
<dbReference type="EMBL" id="EU407789">
    <property type="protein sequence ID" value="ACB06201.1"/>
    <property type="molecule type" value="Genomic_DNA"/>
</dbReference>
<dbReference type="EMBL" id="EU407790">
    <property type="protein sequence ID" value="ACB06213.1"/>
    <property type="molecule type" value="Genomic_DNA"/>
</dbReference>
<dbReference type="EMBL" id="EU407791">
    <property type="protein sequence ID" value="ACB06225.1"/>
    <property type="molecule type" value="Genomic_DNA"/>
</dbReference>
<dbReference type="EMBL" id="EU407792">
    <property type="protein sequence ID" value="ACB06237.1"/>
    <property type="molecule type" value="Genomic_DNA"/>
</dbReference>
<dbReference type="EMBL" id="EU407793">
    <property type="protein sequence ID" value="ACB06249.1"/>
    <property type="molecule type" value="Genomic_DNA"/>
</dbReference>
<dbReference type="EMBL" id="EU407794">
    <property type="protein sequence ID" value="ACB06261.1"/>
    <property type="molecule type" value="Genomic_DNA"/>
</dbReference>
<dbReference type="EMBL" id="EU407795">
    <property type="protein sequence ID" value="ACB06273.1"/>
    <property type="molecule type" value="Genomic_DNA"/>
</dbReference>
<dbReference type="EMBL" id="EU407796">
    <property type="protein sequence ID" value="ACB06285.1"/>
    <property type="molecule type" value="Genomic_DNA"/>
</dbReference>
<dbReference type="EMBL" id="EU407797">
    <property type="protein sequence ID" value="ACB06297.1"/>
    <property type="molecule type" value="Genomic_DNA"/>
</dbReference>
<dbReference type="EMBL" id="EU407798">
    <property type="protein sequence ID" value="ACB06309.1"/>
    <property type="molecule type" value="Genomic_DNA"/>
</dbReference>
<dbReference type="EMBL" id="EU407799">
    <property type="protein sequence ID" value="ACB06321.1"/>
    <property type="molecule type" value="Genomic_DNA"/>
</dbReference>
<dbReference type="EMBL" id="EU407800">
    <property type="protein sequence ID" value="ACB06333.1"/>
    <property type="molecule type" value="Genomic_DNA"/>
</dbReference>
<dbReference type="EMBL" id="EU407801">
    <property type="protein sequence ID" value="ACB06345.1"/>
    <property type="molecule type" value="Genomic_DNA"/>
</dbReference>
<dbReference type="EMBL" id="EU407802">
    <property type="protein sequence ID" value="ACB06357.1"/>
    <property type="molecule type" value="Genomic_DNA"/>
</dbReference>
<dbReference type="EMBL" id="EU407803">
    <property type="protein sequence ID" value="ACB06369.1"/>
    <property type="molecule type" value="Genomic_DNA"/>
</dbReference>
<dbReference type="EMBL" id="AC186293">
    <property type="status" value="NOT_ANNOTATED_CDS"/>
    <property type="molecule type" value="Genomic_DNA"/>
</dbReference>
<dbReference type="RefSeq" id="YP_001552233.1">
    <property type="nucleotide sequence ID" value="NC_009885.1"/>
</dbReference>
<dbReference type="SMR" id="Q8HEC2"/>
<dbReference type="FunCoup" id="Q8HEC2">
    <property type="interactions" value="106"/>
</dbReference>
<dbReference type="STRING" id="6238.Q8HEC2"/>
<dbReference type="GeneID" id="5666637"/>
<dbReference type="KEGG" id="cbr:CYTB"/>
<dbReference type="CTD" id="4519"/>
<dbReference type="InParanoid" id="Q8HEC2"/>
<dbReference type="Proteomes" id="UP000008549">
    <property type="component" value="Mitochondrion"/>
</dbReference>
<dbReference type="GO" id="GO:0016020">
    <property type="term" value="C:membrane"/>
    <property type="evidence" value="ECO:0000318"/>
    <property type="project" value="GO_Central"/>
</dbReference>
<dbReference type="GO" id="GO:0005743">
    <property type="term" value="C:mitochondrial inner membrane"/>
    <property type="evidence" value="ECO:0007669"/>
    <property type="project" value="UniProtKB-SubCell"/>
</dbReference>
<dbReference type="GO" id="GO:0045275">
    <property type="term" value="C:respiratory chain complex III"/>
    <property type="evidence" value="ECO:0000318"/>
    <property type="project" value="GO_Central"/>
</dbReference>
<dbReference type="GO" id="GO:0009055">
    <property type="term" value="F:electron transfer activity"/>
    <property type="evidence" value="ECO:0007669"/>
    <property type="project" value="InterPro"/>
</dbReference>
<dbReference type="GO" id="GO:0046872">
    <property type="term" value="F:metal ion binding"/>
    <property type="evidence" value="ECO:0007669"/>
    <property type="project" value="UniProtKB-KW"/>
</dbReference>
<dbReference type="GO" id="GO:0016491">
    <property type="term" value="F:oxidoreductase activity"/>
    <property type="evidence" value="ECO:0007669"/>
    <property type="project" value="InterPro"/>
</dbReference>
<dbReference type="GO" id="GO:0006122">
    <property type="term" value="P:mitochondrial electron transport, ubiquinol to cytochrome c"/>
    <property type="evidence" value="ECO:0000318"/>
    <property type="project" value="GO_Central"/>
</dbReference>
<dbReference type="GO" id="GO:1902600">
    <property type="term" value="P:proton transmembrane transport"/>
    <property type="evidence" value="ECO:0007669"/>
    <property type="project" value="GOC"/>
</dbReference>
<dbReference type="CDD" id="cd00290">
    <property type="entry name" value="cytochrome_b_C"/>
    <property type="match status" value="1"/>
</dbReference>
<dbReference type="CDD" id="cd00284">
    <property type="entry name" value="Cytochrome_b_N"/>
    <property type="match status" value="1"/>
</dbReference>
<dbReference type="FunFam" id="1.20.810.10:FF:000004">
    <property type="entry name" value="Cytochrome b"/>
    <property type="match status" value="1"/>
</dbReference>
<dbReference type="Gene3D" id="1.20.810.10">
    <property type="entry name" value="Cytochrome Bc1 Complex, Chain C"/>
    <property type="match status" value="1"/>
</dbReference>
<dbReference type="InterPro" id="IPR005798">
    <property type="entry name" value="Cyt_b/b6_C"/>
</dbReference>
<dbReference type="InterPro" id="IPR036150">
    <property type="entry name" value="Cyt_b/b6_C_sf"/>
</dbReference>
<dbReference type="InterPro" id="IPR005797">
    <property type="entry name" value="Cyt_b/b6_N"/>
</dbReference>
<dbReference type="InterPro" id="IPR027387">
    <property type="entry name" value="Cytb/b6-like_sf"/>
</dbReference>
<dbReference type="InterPro" id="IPR048260">
    <property type="entry name" value="Cytochrome_b_C_euk/bac"/>
</dbReference>
<dbReference type="InterPro" id="IPR048259">
    <property type="entry name" value="Cytochrome_b_N_euk/bac"/>
</dbReference>
<dbReference type="InterPro" id="IPR016174">
    <property type="entry name" value="Di-haem_cyt_TM"/>
</dbReference>
<dbReference type="PANTHER" id="PTHR19271">
    <property type="entry name" value="CYTOCHROME B"/>
    <property type="match status" value="1"/>
</dbReference>
<dbReference type="PANTHER" id="PTHR19271:SF16">
    <property type="entry name" value="CYTOCHROME B"/>
    <property type="match status" value="1"/>
</dbReference>
<dbReference type="Pfam" id="PF00032">
    <property type="entry name" value="Cytochrom_B_C"/>
    <property type="match status" value="1"/>
</dbReference>
<dbReference type="Pfam" id="PF00033">
    <property type="entry name" value="Cytochrome_B"/>
    <property type="match status" value="1"/>
</dbReference>
<dbReference type="SUPFAM" id="SSF81648">
    <property type="entry name" value="a domain/subunit of cytochrome bc1 complex (Ubiquinol-cytochrome c reductase)"/>
    <property type="match status" value="1"/>
</dbReference>
<dbReference type="SUPFAM" id="SSF81342">
    <property type="entry name" value="Transmembrane di-heme cytochromes"/>
    <property type="match status" value="1"/>
</dbReference>
<dbReference type="PROSITE" id="PS51003">
    <property type="entry name" value="CYTB_CTER"/>
    <property type="match status" value="1"/>
</dbReference>
<dbReference type="PROSITE" id="PS51002">
    <property type="entry name" value="CYTB_NTER"/>
    <property type="match status" value="1"/>
</dbReference>
<proteinExistence type="inferred from homology"/>
<accession>Q8HEC2</accession>
<accession>B1PE38</accession>
<accession>B1PE50</accession>
<accession>B1PE62</accession>
<accession>B1PED4</accession>
<accession>B1PEF8</accession>
<accession>B1PEI2</accession>
<accession>B1PEK6</accession>
<accession>B1PEP2</accession>
<accession>B1PEU0</accession>
<reference key="1">
    <citation type="journal article" date="2003" name="Mol. Biol. Evol.">
        <title>Phylogenetics in Caenorhabditis elegans: an analysis of divergence and outcrossing.</title>
        <authorList>
            <person name="Denver D.R."/>
            <person name="Morris K."/>
            <person name="Thomas W.K."/>
        </authorList>
    </citation>
    <scope>NUCLEOTIDE SEQUENCE [GENOMIC DNA]</scope>
    <scope>VARIANTS THR-97; LEU-321 AND PHE-342</scope>
    <source>
        <strain>PB800</strain>
    </source>
</reference>
<reference key="2">
    <citation type="journal article" date="2008" name="BMC Evol. Biol.">
        <title>Muller's Ratchet and compensatory mutation in Caenorhabditis briggsae mitochondrial genome evolution.</title>
        <authorList>
            <person name="Howe D.K."/>
            <person name="Denver D.R."/>
        </authorList>
    </citation>
    <scope>NUCLEOTIDE SEQUENCE [GENOMIC DNA]</scope>
    <scope>VARIANTS SER-54; THR-97; LEU-142; ILE-205; THR-222; PHE-234; LEU-257; VAL-297; TRP-317; LEU-321; PHE-342; ILE-342 AND VAL-353</scope>
    <source>
        <strain>BW287</strain>
        <strain>ED3032</strain>
        <strain>ED3033</strain>
        <strain>ED3034</strain>
        <strain>ED3035</strain>
        <strain>ED3036</strain>
        <strain>ED3037</strain>
        <strain>ED3083</strain>
        <strain>ED3092</strain>
        <strain>ED3101</strain>
        <strain>EG4181</strain>
        <strain>EG4207A</strain>
        <strain>HK104</strain>
        <strain>HK105</strain>
        <strain>JU403</strain>
        <strain>JU439</strain>
        <strain>JU516</strain>
        <strain>JU725</strain>
        <strain>JU726</strain>
        <strain>JU793</strain>
        <strain>PB800</strain>
        <strain>PB826</strain>
        <strain>VT847</strain>
    </source>
</reference>
<reference key="3">
    <citation type="journal article" date="2003" name="PLoS Biol.">
        <title>The genome sequence of Caenorhabditis briggsae: a platform for comparative genomics.</title>
        <authorList>
            <person name="Stein L.D."/>
            <person name="Bao Z."/>
            <person name="Blasiar D."/>
            <person name="Blumenthal T."/>
            <person name="Brent M.R."/>
            <person name="Chen N."/>
            <person name="Chinwalla A."/>
            <person name="Clarke L."/>
            <person name="Clee C."/>
            <person name="Coghlan A."/>
            <person name="Coulson A."/>
            <person name="D'Eustachio P."/>
            <person name="Fitch D.H.A."/>
            <person name="Fulton L.A."/>
            <person name="Fulton R.E."/>
            <person name="Griffiths-Jones S."/>
            <person name="Harris T.W."/>
            <person name="Hillier L.W."/>
            <person name="Kamath R."/>
            <person name="Kuwabara P.E."/>
            <person name="Mardis E.R."/>
            <person name="Marra M.A."/>
            <person name="Miner T.L."/>
            <person name="Minx P."/>
            <person name="Mullikin J.C."/>
            <person name="Plumb R.W."/>
            <person name="Rogers J."/>
            <person name="Schein J.E."/>
            <person name="Sohrmann M."/>
            <person name="Spieth J."/>
            <person name="Stajich J.E."/>
            <person name="Wei C."/>
            <person name="Willey D."/>
            <person name="Wilson R.K."/>
            <person name="Durbin R.M."/>
            <person name="Waterston R.H."/>
        </authorList>
    </citation>
    <scope>NUCLEOTIDE SEQUENCE [LARGE SCALE GENOMIC DNA]</scope>
    <source>
        <strain>AF16</strain>
    </source>
</reference>
<sequence>MKINNSLLNFVNGMLVTLPSSKTLTLSWNFGSMLGMVLVFQIVTGTFLAFYYTPDSLMAFSTVQYIMYEVNFGWIFRIFHFNGASLFFIFLYLHIFKGLFFMSYRLKKVWMSGLTIYLLVMMEAFMGYVLVWAQMSFWAAVVITSLLSVIPIWGPTIVTWIWSGFGVTGATLKFFFVLHFLLPWAILFIVLGHLIFLHSTGSTSSLYCHGDYDKVCFSPEYIGKDAYNIVVWLVFIVLSLIYPFNLGDAEMFIEADPMMSPVHIVPEWYFLFAYAILRAIPNKVLGVIALLMSIVTFYFFALVNNYTSCLTKLNKFLVFLFIISSVILSWLGQCMVEDPFTVLSPLFSVIYFGLAYLLLGIFMTSKLLFK</sequence>
<organism>
    <name type="scientific">Caenorhabditis briggsae</name>
    <dbReference type="NCBI Taxonomy" id="6238"/>
    <lineage>
        <taxon>Eukaryota</taxon>
        <taxon>Metazoa</taxon>
        <taxon>Ecdysozoa</taxon>
        <taxon>Nematoda</taxon>
        <taxon>Chromadorea</taxon>
        <taxon>Rhabditida</taxon>
        <taxon>Rhabditina</taxon>
        <taxon>Rhabditomorpha</taxon>
        <taxon>Rhabditoidea</taxon>
        <taxon>Rhabditidae</taxon>
        <taxon>Peloderinae</taxon>
        <taxon>Caenorhabditis</taxon>
    </lineage>
</organism>
<protein>
    <recommendedName>
        <fullName>Cytochrome b</fullName>
    </recommendedName>
    <alternativeName>
        <fullName>Complex III subunit 3</fullName>
    </alternativeName>
    <alternativeName>
        <fullName>Complex III subunit III</fullName>
    </alternativeName>
    <alternativeName>
        <fullName>Cytochrome b-c1 complex subunit 3</fullName>
    </alternativeName>
    <alternativeName>
        <fullName>Ubiquinol-cytochrome-c reductase complex cytochrome b subunit</fullName>
    </alternativeName>
</protein>
<name>CYB_CAEBR</name>
<comment type="function">
    <text evidence="3">Component of the ubiquinol-cytochrome c reductase complex (complex III or cytochrome b-c1 complex) that is part of the mitochondrial respiratory chain. The b-c1 complex mediates electron transfer from ubiquinol to cytochrome c. Contributes to the generation of a proton gradient across the mitochondrial membrane that is then used for ATP synthesis.</text>
</comment>
<comment type="cofactor">
    <cofactor evidence="3">
        <name>heme b</name>
        <dbReference type="ChEBI" id="CHEBI:60344"/>
    </cofactor>
    <text evidence="3">Binds 2 heme b groups non-covalently.</text>
</comment>
<comment type="subunit">
    <text evidence="1">The main subunits of complex b-c1 are: cytochrome b, cytochrome c1 and the Rieske protein.</text>
</comment>
<comment type="subcellular location">
    <subcellularLocation>
        <location evidence="3">Mitochondrion inner membrane</location>
        <topology evidence="3">Multi-pass membrane protein</topology>
    </subcellularLocation>
</comment>
<comment type="miscellaneous">
    <text evidence="1">Heme 1 (or BL or b562) is low-potential and absorbs at about 562 nm, and heme 2 (or BH or b566) is high-potential and absorbs at about 566 nm.</text>
</comment>
<comment type="similarity">
    <text evidence="5 6">Belongs to the cytochrome b family.</text>
</comment>
<comment type="caution">
    <text evidence="3">The protein contains an even number of transmembrane helices, fewer than predicted by bioinformatics tools.</text>
</comment>
<comment type="sequence caution" evidence="9">
    <conflict type="erroneous initiation">
        <sequence resource="EMBL-CDS" id="AAO13511"/>
    </conflict>
</comment>
<feature type="chain" id="PRO_0000060702" description="Cytochrome b">
    <location>
        <begin position="1"/>
        <end position="370"/>
    </location>
</feature>
<feature type="transmembrane region" description="Helical" evidence="3">
    <location>
        <begin position="30"/>
        <end position="50"/>
    </location>
</feature>
<feature type="transmembrane region" description="Helical" evidence="3">
    <location>
        <begin position="74"/>
        <end position="96"/>
    </location>
</feature>
<feature type="transmembrane region" description="Helical" evidence="3">
    <location>
        <begin position="109"/>
        <end position="129"/>
    </location>
</feature>
<feature type="transmembrane region" description="Helical" evidence="3">
    <location>
        <begin position="175"/>
        <end position="195"/>
    </location>
</feature>
<feature type="transmembrane region" description="Helical" evidence="3">
    <location>
        <begin position="221"/>
        <end position="240"/>
    </location>
</feature>
<feature type="transmembrane region" description="Helical" evidence="4">
    <location>
        <begin position="284"/>
        <end position="304"/>
    </location>
</feature>
<feature type="transmembrane region" description="Helical" evidence="4">
    <location>
        <begin position="316"/>
        <end position="336"/>
    </location>
</feature>
<feature type="transmembrane region" description="Helical" evidence="4">
    <location>
        <begin position="342"/>
        <end position="362"/>
    </location>
</feature>
<feature type="binding site" description="axial binding residue" evidence="3">
    <location>
        <position position="80"/>
    </location>
    <ligand>
        <name>heme b</name>
        <dbReference type="ChEBI" id="CHEBI:60344"/>
        <label>b562</label>
    </ligand>
    <ligandPart>
        <name>Fe</name>
        <dbReference type="ChEBI" id="CHEBI:18248"/>
    </ligandPart>
</feature>
<feature type="binding site" description="axial binding residue" evidence="3">
    <location>
        <position position="94"/>
    </location>
    <ligand>
        <name>heme b</name>
        <dbReference type="ChEBI" id="CHEBI:60344"/>
        <label>b566</label>
    </ligand>
    <ligandPart>
        <name>Fe</name>
        <dbReference type="ChEBI" id="CHEBI:18248"/>
    </ligandPart>
</feature>
<feature type="binding site" description="axial binding residue" evidence="3">
    <location>
        <position position="179"/>
    </location>
    <ligand>
        <name>heme b</name>
        <dbReference type="ChEBI" id="CHEBI:60344"/>
        <label>b562</label>
    </ligand>
    <ligandPart>
        <name>Fe</name>
        <dbReference type="ChEBI" id="CHEBI:18248"/>
    </ligandPart>
</feature>
<feature type="binding site" description="axial binding residue" evidence="3">
    <location>
        <position position="193"/>
    </location>
    <ligand>
        <name>heme b</name>
        <dbReference type="ChEBI" id="CHEBI:60344"/>
        <label>b566</label>
    </ligand>
    <ligandPart>
        <name>Fe</name>
        <dbReference type="ChEBI" id="CHEBI:18248"/>
    </ligandPart>
</feature>
<feature type="binding site" evidence="2">
    <location>
        <position position="198"/>
    </location>
    <ligand>
        <name>a ubiquinone</name>
        <dbReference type="ChEBI" id="CHEBI:16389"/>
    </ligand>
</feature>
<feature type="sequence variant" description="In strain: JU403, JU439, JU516 and JU793." evidence="8">
    <original>P</original>
    <variation>S</variation>
    <location>
        <position position="54"/>
    </location>
</feature>
<feature type="sequence variant" description="In strain: PB800." evidence="7 8">
    <original>K</original>
    <variation>T</variation>
    <location>
        <position position="97"/>
    </location>
</feature>
<feature type="sequence variant" description="In strain: EG4181." evidence="8">
    <original>V</original>
    <variation>L</variation>
    <location>
        <position position="142"/>
    </location>
</feature>
<feature type="sequence variant" description="In strain: JU403, JU439, JU516 and JU793." evidence="8">
    <original>S</original>
    <variation>I</variation>
    <location>
        <position position="205"/>
    </location>
</feature>
<feature type="sequence variant" description="In strain: ED3092 and ED3101." evidence="8">
    <original>I</original>
    <variation>T</variation>
    <location>
        <position position="222"/>
    </location>
</feature>
<feature type="sequence variant" description="In strain: ED3092 and ED3101." evidence="8">
    <original>V</original>
    <variation>F</variation>
    <location>
        <position position="234"/>
    </location>
</feature>
<feature type="sequence variant" description="In strain: HK104." evidence="8">
    <original>P</original>
    <variation>L</variation>
    <location>
        <position position="257"/>
    </location>
</feature>
<feature type="sequence variant" description="In strain: JU725." evidence="8">
    <original>F</original>
    <variation>V</variation>
    <location>
        <position position="297"/>
    </location>
</feature>
<feature type="sequence variant" description="In strain: JU725." evidence="8">
    <original>L</original>
    <variation>W</variation>
    <location>
        <position position="317"/>
    </location>
</feature>
<feature type="sequence variant" description="In strain: PB800." evidence="7 8">
    <original>F</original>
    <variation>L</variation>
    <location>
        <position position="321"/>
    </location>
</feature>
<feature type="sequence variant" description="In strain: BW287, EG4181, EG4207A, HK104, HK105, JU403, JU439, JU516, JU725, JU793, PB800 and PB826." evidence="7 8">
    <original>V</original>
    <variation>F</variation>
    <location>
        <position position="342"/>
    </location>
</feature>
<feature type="sequence variant" description="In strain: ED3033, ED3034, ED3035, ED3037, ED3092, ED3101 and VT847." evidence="8">
    <original>V</original>
    <variation>I</variation>
    <location>
        <position position="342"/>
    </location>
</feature>
<feature type="sequence variant" description="In strain: PB826." evidence="8">
    <original>G</original>
    <variation>V</variation>
    <location>
        <position position="353"/>
    </location>
</feature>
<feature type="sequence conflict" description="In Ref. 1; AAO13511 and 2; ACB06105/ACB06117/ACB06129/ACB06141/ACB06153/ACB06165/ACB06177/ACB06189/ACB06201/ACB06213/ACB06225/ACB06237/ACB06249/ACB06261/ACB06273/ACB06285/ACB06297/ACB06309/ACB06321/ACB06333/ACB06345/ACB06357/ACB06369." evidence="9" ref="1 2">
    <original>F</original>
    <variation>V</variation>
    <location>
        <position position="188"/>
    </location>
</feature>
<gene>
    <name type="primary">ctb-1</name>
    <name type="synonym">cob</name>
    <name type="synonym">cytb</name>
    <name type="synonym">Mtcyb</name>
</gene>
<keyword id="KW-0249">Electron transport</keyword>
<keyword id="KW-0349">Heme</keyword>
<keyword id="KW-0408">Iron</keyword>
<keyword id="KW-0472">Membrane</keyword>
<keyword id="KW-0479">Metal-binding</keyword>
<keyword id="KW-0496">Mitochondrion</keyword>
<keyword id="KW-0999">Mitochondrion inner membrane</keyword>
<keyword id="KW-1185">Reference proteome</keyword>
<keyword id="KW-0679">Respiratory chain</keyword>
<keyword id="KW-0812">Transmembrane</keyword>
<keyword id="KW-1133">Transmembrane helix</keyword>
<keyword id="KW-0813">Transport</keyword>
<keyword id="KW-0830">Ubiquinone</keyword>
<evidence type="ECO:0000250" key="1"/>
<evidence type="ECO:0000250" key="2">
    <source>
        <dbReference type="UniProtKB" id="P00157"/>
    </source>
</evidence>
<evidence type="ECO:0000250" key="3">
    <source>
        <dbReference type="UniProtKB" id="P00163"/>
    </source>
</evidence>
<evidence type="ECO:0000255" key="4"/>
<evidence type="ECO:0000255" key="5">
    <source>
        <dbReference type="PROSITE-ProRule" id="PRU00967"/>
    </source>
</evidence>
<evidence type="ECO:0000255" key="6">
    <source>
        <dbReference type="PROSITE-ProRule" id="PRU00968"/>
    </source>
</evidence>
<evidence type="ECO:0000269" key="7">
    <source>
    </source>
</evidence>
<evidence type="ECO:0000269" key="8">
    <source>
    </source>
</evidence>
<evidence type="ECO:0000305" key="9"/>
<geneLocation type="mitochondrion"/>